<evidence type="ECO:0000255" key="1">
    <source>
        <dbReference type="HAMAP-Rule" id="MF_00074"/>
    </source>
</evidence>
<proteinExistence type="inferred from homology"/>
<sequence length="211" mass="23651">MNDDFIAAEELLQRGAAALSFPVNQEVIEKLMHYLQLLAKWNRVHNLTAIREPQQQVIVHLLDSLVVAPFLPPAQTIADIGSGAGLPGIVLAIVCPQQQFFLVESNTKKSVFLREAVRQLALENVKVVAMRAEQWRPEAKLNVLISRAVSDINSFLMWTAALGDENSRWLLMKAHDDEVCTQKDFYVENVLPLTVPLLDAARVLFVVKKKS</sequence>
<gene>
    <name evidence="1" type="primary">rsmG</name>
    <name type="ordered locus">DNO_1150</name>
</gene>
<organism>
    <name type="scientific">Dichelobacter nodosus (strain VCS1703A)</name>
    <dbReference type="NCBI Taxonomy" id="246195"/>
    <lineage>
        <taxon>Bacteria</taxon>
        <taxon>Pseudomonadati</taxon>
        <taxon>Pseudomonadota</taxon>
        <taxon>Gammaproteobacteria</taxon>
        <taxon>Cardiobacteriales</taxon>
        <taxon>Cardiobacteriaceae</taxon>
        <taxon>Dichelobacter</taxon>
    </lineage>
</organism>
<feature type="chain" id="PRO_0000335348" description="Ribosomal RNA small subunit methyltransferase G">
    <location>
        <begin position="1"/>
        <end position="211"/>
    </location>
</feature>
<feature type="binding site" evidence="1">
    <location>
        <position position="81"/>
    </location>
    <ligand>
        <name>S-adenosyl-L-methionine</name>
        <dbReference type="ChEBI" id="CHEBI:59789"/>
    </ligand>
</feature>
<feature type="binding site" evidence="1">
    <location>
        <position position="86"/>
    </location>
    <ligand>
        <name>S-adenosyl-L-methionine</name>
        <dbReference type="ChEBI" id="CHEBI:59789"/>
    </ligand>
</feature>
<feature type="binding site" evidence="1">
    <location>
        <begin position="132"/>
        <end position="133"/>
    </location>
    <ligand>
        <name>S-adenosyl-L-methionine</name>
        <dbReference type="ChEBI" id="CHEBI:59789"/>
    </ligand>
</feature>
<feature type="binding site" evidence="1">
    <location>
        <position position="147"/>
    </location>
    <ligand>
        <name>S-adenosyl-L-methionine</name>
        <dbReference type="ChEBI" id="CHEBI:59789"/>
    </ligand>
</feature>
<dbReference type="EC" id="2.1.1.170" evidence="1"/>
<dbReference type="EMBL" id="CP000513">
    <property type="protein sequence ID" value="ABQ13166.1"/>
    <property type="molecule type" value="Genomic_DNA"/>
</dbReference>
<dbReference type="RefSeq" id="WP_012031454.1">
    <property type="nucleotide sequence ID" value="NC_009446.1"/>
</dbReference>
<dbReference type="SMR" id="A5EXK3"/>
<dbReference type="STRING" id="246195.DNO_1150"/>
<dbReference type="KEGG" id="dno:DNO_1150"/>
<dbReference type="eggNOG" id="COG0357">
    <property type="taxonomic scope" value="Bacteria"/>
</dbReference>
<dbReference type="HOGENOM" id="CLU_065341_2_0_6"/>
<dbReference type="OrthoDB" id="9808773at2"/>
<dbReference type="Proteomes" id="UP000000248">
    <property type="component" value="Chromosome"/>
</dbReference>
<dbReference type="GO" id="GO:0005829">
    <property type="term" value="C:cytosol"/>
    <property type="evidence" value="ECO:0007669"/>
    <property type="project" value="TreeGrafter"/>
</dbReference>
<dbReference type="GO" id="GO:0070043">
    <property type="term" value="F:rRNA (guanine-N7-)-methyltransferase activity"/>
    <property type="evidence" value="ECO:0007669"/>
    <property type="project" value="UniProtKB-UniRule"/>
</dbReference>
<dbReference type="Gene3D" id="3.40.50.150">
    <property type="entry name" value="Vaccinia Virus protein VP39"/>
    <property type="match status" value="1"/>
</dbReference>
<dbReference type="HAMAP" id="MF_00074">
    <property type="entry name" value="16SrRNA_methyltr_G"/>
    <property type="match status" value="1"/>
</dbReference>
<dbReference type="InterPro" id="IPR003682">
    <property type="entry name" value="rRNA_ssu_MeTfrase_G"/>
</dbReference>
<dbReference type="InterPro" id="IPR029063">
    <property type="entry name" value="SAM-dependent_MTases_sf"/>
</dbReference>
<dbReference type="NCBIfam" id="TIGR00138">
    <property type="entry name" value="rsmG_gidB"/>
    <property type="match status" value="1"/>
</dbReference>
<dbReference type="PANTHER" id="PTHR31760">
    <property type="entry name" value="S-ADENOSYL-L-METHIONINE-DEPENDENT METHYLTRANSFERASES SUPERFAMILY PROTEIN"/>
    <property type="match status" value="1"/>
</dbReference>
<dbReference type="PANTHER" id="PTHR31760:SF0">
    <property type="entry name" value="S-ADENOSYL-L-METHIONINE-DEPENDENT METHYLTRANSFERASES SUPERFAMILY PROTEIN"/>
    <property type="match status" value="1"/>
</dbReference>
<dbReference type="Pfam" id="PF02527">
    <property type="entry name" value="GidB"/>
    <property type="match status" value="1"/>
</dbReference>
<dbReference type="PIRSF" id="PIRSF003078">
    <property type="entry name" value="GidB"/>
    <property type="match status" value="1"/>
</dbReference>
<dbReference type="SUPFAM" id="SSF53335">
    <property type="entry name" value="S-adenosyl-L-methionine-dependent methyltransferases"/>
    <property type="match status" value="1"/>
</dbReference>
<reference key="1">
    <citation type="journal article" date="2007" name="Nat. Biotechnol.">
        <title>Genome sequence and identification of candidate vaccine antigens from the animal pathogen Dichelobacter nodosus.</title>
        <authorList>
            <person name="Myers G.S.A."/>
            <person name="Parker D."/>
            <person name="Al-Hasani K."/>
            <person name="Kennan R.M."/>
            <person name="Seemann T."/>
            <person name="Ren Q."/>
            <person name="Badger J.H."/>
            <person name="Selengut J.D."/>
            <person name="Deboy R.T."/>
            <person name="Tettelin H."/>
            <person name="Boyce J.D."/>
            <person name="McCarl V.P."/>
            <person name="Han X."/>
            <person name="Nelson W.C."/>
            <person name="Madupu R."/>
            <person name="Mohamoud Y."/>
            <person name="Holley T."/>
            <person name="Fedorova N."/>
            <person name="Khouri H."/>
            <person name="Bottomley S.P."/>
            <person name="Whittington R.J."/>
            <person name="Adler B."/>
            <person name="Songer J.G."/>
            <person name="Rood J.I."/>
            <person name="Paulsen I.T."/>
        </authorList>
    </citation>
    <scope>NUCLEOTIDE SEQUENCE [LARGE SCALE GENOMIC DNA]</scope>
    <source>
        <strain>VCS1703A</strain>
    </source>
</reference>
<keyword id="KW-0963">Cytoplasm</keyword>
<keyword id="KW-0489">Methyltransferase</keyword>
<keyword id="KW-1185">Reference proteome</keyword>
<keyword id="KW-0698">rRNA processing</keyword>
<keyword id="KW-0949">S-adenosyl-L-methionine</keyword>
<keyword id="KW-0808">Transferase</keyword>
<accession>A5EXK3</accession>
<protein>
    <recommendedName>
        <fullName evidence="1">Ribosomal RNA small subunit methyltransferase G</fullName>
        <ecNumber evidence="1">2.1.1.170</ecNumber>
    </recommendedName>
    <alternativeName>
        <fullName evidence="1">16S rRNA 7-methylguanosine methyltransferase</fullName>
        <shortName evidence="1">16S rRNA m7G methyltransferase</shortName>
    </alternativeName>
</protein>
<name>RSMG_DICNV</name>
<comment type="function">
    <text evidence="1">Specifically methylates the N7 position of guanine in position 527 of 16S rRNA.</text>
</comment>
<comment type="catalytic activity">
    <reaction evidence="1">
        <text>guanosine(527) in 16S rRNA + S-adenosyl-L-methionine = N(7)-methylguanosine(527) in 16S rRNA + S-adenosyl-L-homocysteine</text>
        <dbReference type="Rhea" id="RHEA:42732"/>
        <dbReference type="Rhea" id="RHEA-COMP:10209"/>
        <dbReference type="Rhea" id="RHEA-COMP:10210"/>
        <dbReference type="ChEBI" id="CHEBI:57856"/>
        <dbReference type="ChEBI" id="CHEBI:59789"/>
        <dbReference type="ChEBI" id="CHEBI:74269"/>
        <dbReference type="ChEBI" id="CHEBI:74480"/>
        <dbReference type="EC" id="2.1.1.170"/>
    </reaction>
</comment>
<comment type="subcellular location">
    <subcellularLocation>
        <location evidence="1">Cytoplasm</location>
    </subcellularLocation>
</comment>
<comment type="similarity">
    <text evidence="1">Belongs to the methyltransferase superfamily. RNA methyltransferase RsmG family.</text>
</comment>